<keyword id="KW-0175">Coiled coil</keyword>
<keyword id="KW-0539">Nucleus</keyword>
<keyword id="KW-1185">Reference proteome</keyword>
<keyword id="KW-0678">Repressor</keyword>
<keyword id="KW-0804">Transcription</keyword>
<keyword id="KW-0805">Transcription regulation</keyword>
<organism>
    <name type="scientific">Rattus norvegicus</name>
    <name type="common">Rat</name>
    <dbReference type="NCBI Taxonomy" id="10116"/>
    <lineage>
        <taxon>Eukaryota</taxon>
        <taxon>Metazoa</taxon>
        <taxon>Chordata</taxon>
        <taxon>Craniata</taxon>
        <taxon>Vertebrata</taxon>
        <taxon>Euteleostomi</taxon>
        <taxon>Mammalia</taxon>
        <taxon>Eutheria</taxon>
        <taxon>Euarchontoglires</taxon>
        <taxon>Glires</taxon>
        <taxon>Rodentia</taxon>
        <taxon>Myomorpha</taxon>
        <taxon>Muroidea</taxon>
        <taxon>Muridae</taxon>
        <taxon>Murinae</taxon>
        <taxon>Rattus</taxon>
    </lineage>
</organism>
<gene>
    <name type="primary">Skor1</name>
    <name type="synonym">Lbxcor1</name>
</gene>
<proteinExistence type="inferred from homology"/>
<feature type="chain" id="PRO_0000129392" description="SKI family transcriptional corepressor 1">
    <location>
        <begin position="1"/>
        <end position="964"/>
    </location>
</feature>
<feature type="region of interest" description="Disordered" evidence="3">
    <location>
        <begin position="45"/>
        <end position="72"/>
    </location>
</feature>
<feature type="region of interest" description="Disordered" evidence="3">
    <location>
        <begin position="278"/>
        <end position="365"/>
    </location>
</feature>
<feature type="region of interest" description="Disordered" evidence="3">
    <location>
        <begin position="414"/>
        <end position="452"/>
    </location>
</feature>
<feature type="region of interest" description="Disordered" evidence="3">
    <location>
        <begin position="525"/>
        <end position="587"/>
    </location>
</feature>
<feature type="region of interest" description="Disordered" evidence="3">
    <location>
        <begin position="610"/>
        <end position="766"/>
    </location>
</feature>
<feature type="region of interest" description="Disordered" evidence="3">
    <location>
        <begin position="793"/>
        <end position="842"/>
    </location>
</feature>
<feature type="coiled-coil region" evidence="2">
    <location>
        <begin position="857"/>
        <end position="921"/>
    </location>
</feature>
<feature type="compositionally biased region" description="Gly residues" evidence="3">
    <location>
        <begin position="283"/>
        <end position="310"/>
    </location>
</feature>
<feature type="compositionally biased region" description="Low complexity" evidence="3">
    <location>
        <begin position="345"/>
        <end position="355"/>
    </location>
</feature>
<feature type="compositionally biased region" description="Gly residues" evidence="3">
    <location>
        <begin position="356"/>
        <end position="365"/>
    </location>
</feature>
<feature type="compositionally biased region" description="Gly residues" evidence="3">
    <location>
        <begin position="417"/>
        <end position="440"/>
    </location>
</feature>
<feature type="compositionally biased region" description="Pro residues" evidence="3">
    <location>
        <begin position="571"/>
        <end position="583"/>
    </location>
</feature>
<feature type="compositionally biased region" description="Acidic residues" evidence="3">
    <location>
        <begin position="652"/>
        <end position="661"/>
    </location>
</feature>
<feature type="compositionally biased region" description="Basic and acidic residues" evidence="3">
    <location>
        <begin position="798"/>
        <end position="808"/>
    </location>
</feature>
<feature type="compositionally biased region" description="Polar residues" evidence="3">
    <location>
        <begin position="823"/>
        <end position="834"/>
    </location>
</feature>
<protein>
    <recommendedName>
        <fullName>SKI family transcriptional corepressor 1</fullName>
    </recommendedName>
    <alternativeName>
        <fullName>Ladybird homeobox corepressor 1</fullName>
    </alternativeName>
</protein>
<accession>P84551</accession>
<reference evidence="5" key="1">
    <citation type="journal article" date="2004" name="Nature">
        <title>Genome sequence of the Brown Norway rat yields insights into mammalian evolution.</title>
        <authorList>
            <person name="Gibbs R.A."/>
            <person name="Weinstock G.M."/>
            <person name="Metzker M.L."/>
            <person name="Muzny D.M."/>
            <person name="Sodergren E.J."/>
            <person name="Scherer S."/>
            <person name="Scott G."/>
            <person name="Steffen D."/>
            <person name="Worley K.C."/>
            <person name="Burch P.E."/>
            <person name="Okwuonu G."/>
            <person name="Hines S."/>
            <person name="Lewis L."/>
            <person name="Deramo C."/>
            <person name="Delgado O."/>
            <person name="Dugan-Rocha S."/>
            <person name="Miner G."/>
            <person name="Morgan M."/>
            <person name="Hawes A."/>
            <person name="Gill R."/>
            <person name="Holt R.A."/>
            <person name="Adams M.D."/>
            <person name="Amanatides P.G."/>
            <person name="Baden-Tillson H."/>
            <person name="Barnstead M."/>
            <person name="Chin S."/>
            <person name="Evans C.A."/>
            <person name="Ferriera S."/>
            <person name="Fosler C."/>
            <person name="Glodek A."/>
            <person name="Gu Z."/>
            <person name="Jennings D."/>
            <person name="Kraft C.L."/>
            <person name="Nguyen T."/>
            <person name="Pfannkoch C.M."/>
            <person name="Sitter C."/>
            <person name="Sutton G.G."/>
            <person name="Venter J.C."/>
            <person name="Woodage T."/>
            <person name="Smith D."/>
            <person name="Lee H.-M."/>
            <person name="Gustafson E."/>
            <person name="Cahill P."/>
            <person name="Kana A."/>
            <person name="Doucette-Stamm L."/>
            <person name="Weinstock K."/>
            <person name="Fechtel K."/>
            <person name="Weiss R.B."/>
            <person name="Dunn D.M."/>
            <person name="Green E.D."/>
            <person name="Blakesley R.W."/>
            <person name="Bouffard G.G."/>
            <person name="De Jong P.J."/>
            <person name="Osoegawa K."/>
            <person name="Zhu B."/>
            <person name="Marra M."/>
            <person name="Schein J."/>
            <person name="Bosdet I."/>
            <person name="Fjell C."/>
            <person name="Jones S."/>
            <person name="Krzywinski M."/>
            <person name="Mathewson C."/>
            <person name="Siddiqui A."/>
            <person name="Wye N."/>
            <person name="McPherson J."/>
            <person name="Zhao S."/>
            <person name="Fraser C.M."/>
            <person name="Shetty J."/>
            <person name="Shatsman S."/>
            <person name="Geer K."/>
            <person name="Chen Y."/>
            <person name="Abramzon S."/>
            <person name="Nierman W.C."/>
            <person name="Havlak P.H."/>
            <person name="Chen R."/>
            <person name="Durbin K.J."/>
            <person name="Egan A."/>
            <person name="Ren Y."/>
            <person name="Song X.-Z."/>
            <person name="Li B."/>
            <person name="Liu Y."/>
            <person name="Qin X."/>
            <person name="Cawley S."/>
            <person name="Cooney A.J."/>
            <person name="D'Souza L.M."/>
            <person name="Martin K."/>
            <person name="Wu J.Q."/>
            <person name="Gonzalez-Garay M.L."/>
            <person name="Jackson A.R."/>
            <person name="Kalafus K.J."/>
            <person name="McLeod M.P."/>
            <person name="Milosavljevic A."/>
            <person name="Virk D."/>
            <person name="Volkov A."/>
            <person name="Wheeler D.A."/>
            <person name="Zhang Z."/>
            <person name="Bailey J.A."/>
            <person name="Eichler E.E."/>
            <person name="Tuzun E."/>
            <person name="Birney E."/>
            <person name="Mongin E."/>
            <person name="Ureta-Vidal A."/>
            <person name="Woodwark C."/>
            <person name="Zdobnov E."/>
            <person name="Bork P."/>
            <person name="Suyama M."/>
            <person name="Torrents D."/>
            <person name="Alexandersson M."/>
            <person name="Trask B.J."/>
            <person name="Young J.M."/>
            <person name="Huang H."/>
            <person name="Wang H."/>
            <person name="Xing H."/>
            <person name="Daniels S."/>
            <person name="Gietzen D."/>
            <person name="Schmidt J."/>
            <person name="Stevens K."/>
            <person name="Vitt U."/>
            <person name="Wingrove J."/>
            <person name="Camara F."/>
            <person name="Mar Alba M."/>
            <person name="Abril J.F."/>
            <person name="Guigo R."/>
            <person name="Smit A."/>
            <person name="Dubchak I."/>
            <person name="Rubin E.M."/>
            <person name="Couronne O."/>
            <person name="Poliakov A."/>
            <person name="Huebner N."/>
            <person name="Ganten D."/>
            <person name="Goesele C."/>
            <person name="Hummel O."/>
            <person name="Kreitler T."/>
            <person name="Lee Y.-A."/>
            <person name="Monti J."/>
            <person name="Schulz H."/>
            <person name="Zimdahl H."/>
            <person name="Himmelbauer H."/>
            <person name="Lehrach H."/>
            <person name="Jacob H.J."/>
            <person name="Bromberg S."/>
            <person name="Gullings-Handley J."/>
            <person name="Jensen-Seaman M.I."/>
            <person name="Kwitek A.E."/>
            <person name="Lazar J."/>
            <person name="Pasko D."/>
            <person name="Tonellato P.J."/>
            <person name="Twigger S."/>
            <person name="Ponting C.P."/>
            <person name="Duarte J.M."/>
            <person name="Rice S."/>
            <person name="Goodstadt L."/>
            <person name="Beatson S.A."/>
            <person name="Emes R.D."/>
            <person name="Winter E.E."/>
            <person name="Webber C."/>
            <person name="Brandt P."/>
            <person name="Nyakatura G."/>
            <person name="Adetobi M."/>
            <person name="Chiaromonte F."/>
            <person name="Elnitski L."/>
            <person name="Eswara P."/>
            <person name="Hardison R.C."/>
            <person name="Hou M."/>
            <person name="Kolbe D."/>
            <person name="Makova K."/>
            <person name="Miller W."/>
            <person name="Nekrutenko A."/>
            <person name="Riemer C."/>
            <person name="Schwartz S."/>
            <person name="Taylor J."/>
            <person name="Yang S."/>
            <person name="Zhang Y."/>
            <person name="Lindpaintner K."/>
            <person name="Andrews T.D."/>
            <person name="Caccamo M."/>
            <person name="Clamp M."/>
            <person name="Clarke L."/>
            <person name="Curwen V."/>
            <person name="Durbin R.M."/>
            <person name="Eyras E."/>
            <person name="Searle S.M."/>
            <person name="Cooper G.M."/>
            <person name="Batzoglou S."/>
            <person name="Brudno M."/>
            <person name="Sidow A."/>
            <person name="Stone E.A."/>
            <person name="Payseur B.A."/>
            <person name="Bourque G."/>
            <person name="Lopez-Otin C."/>
            <person name="Puente X.S."/>
            <person name="Chakrabarti K."/>
            <person name="Chatterji S."/>
            <person name="Dewey C."/>
            <person name="Pachter L."/>
            <person name="Bray N."/>
            <person name="Yap V.B."/>
            <person name="Caspi A."/>
            <person name="Tesler G."/>
            <person name="Pevzner P.A."/>
            <person name="Haussler D."/>
            <person name="Roskin K.M."/>
            <person name="Baertsch R."/>
            <person name="Clawson H."/>
            <person name="Furey T.S."/>
            <person name="Hinrichs A.S."/>
            <person name="Karolchik D."/>
            <person name="Kent W.J."/>
            <person name="Rosenbloom K.R."/>
            <person name="Trumbower H."/>
            <person name="Weirauch M."/>
            <person name="Cooper D.N."/>
            <person name="Stenson P.D."/>
            <person name="Ma B."/>
            <person name="Brent M."/>
            <person name="Arumugam M."/>
            <person name="Shteynberg D."/>
            <person name="Copley R.R."/>
            <person name="Taylor M.S."/>
            <person name="Riethman H."/>
            <person name="Mudunuri U."/>
            <person name="Peterson J."/>
            <person name="Guyer M."/>
            <person name="Felsenfeld A."/>
            <person name="Old S."/>
            <person name="Mockrin S."/>
            <person name="Collins F.S."/>
        </authorList>
    </citation>
    <scope>NUCLEOTIDE SEQUENCE [LARGE SCALE GENOMIC DNA]</scope>
    <source>
        <strain evidence="4">Brown Norway</strain>
    </source>
</reference>
<dbReference type="EMBL" id="AABR03062264">
    <property type="status" value="NOT_ANNOTATED_CDS"/>
    <property type="molecule type" value="Genomic_DNA"/>
</dbReference>
<dbReference type="RefSeq" id="NP_001363881.1">
    <property type="nucleotide sequence ID" value="NM_001376952.1"/>
</dbReference>
<dbReference type="RefSeq" id="XP_006226487.2">
    <property type="nucleotide sequence ID" value="XM_006226425.2"/>
</dbReference>
<dbReference type="RefSeq" id="XP_006243308.2">
    <property type="nucleotide sequence ID" value="XM_006243246.2"/>
</dbReference>
<dbReference type="SMR" id="P84551"/>
<dbReference type="FunCoup" id="P84551">
    <property type="interactions" value="249"/>
</dbReference>
<dbReference type="STRING" id="10116.ENSRNOP00000018756"/>
<dbReference type="GlyGen" id="P84551">
    <property type="glycosylation" value="1 site"/>
</dbReference>
<dbReference type="iPTMnet" id="P84551"/>
<dbReference type="PhosphoSitePlus" id="P84551"/>
<dbReference type="PaxDb" id="10116-ENSRNOP00000018756"/>
<dbReference type="Ensembl" id="ENSRNOT00000018756.5">
    <property type="protein sequence ID" value="ENSRNOP00000018756.4"/>
    <property type="gene ID" value="ENSRNOG00000013959.6"/>
</dbReference>
<dbReference type="GeneID" id="315748"/>
<dbReference type="UCSC" id="RGD:1307687">
    <property type="organism name" value="rat"/>
</dbReference>
<dbReference type="AGR" id="RGD:1307687"/>
<dbReference type="RGD" id="1307687">
    <property type="gene designation" value="Skor1"/>
</dbReference>
<dbReference type="eggNOG" id="ENOG502QQC2">
    <property type="taxonomic scope" value="Eukaryota"/>
</dbReference>
<dbReference type="GeneTree" id="ENSGT00940000158440"/>
<dbReference type="HOGENOM" id="CLU_011930_1_1_1"/>
<dbReference type="InParanoid" id="P84551"/>
<dbReference type="OMA" id="YLCTPER"/>
<dbReference type="OrthoDB" id="3938623at2759"/>
<dbReference type="PhylomeDB" id="P84551"/>
<dbReference type="TreeFam" id="TF324133"/>
<dbReference type="PRO" id="PR:P84551"/>
<dbReference type="Proteomes" id="UP000002494">
    <property type="component" value="Chromosome 8"/>
</dbReference>
<dbReference type="Bgee" id="ENSRNOG00000013959">
    <property type="expression patterns" value="Expressed in cerebellum and 1 other cell type or tissue"/>
</dbReference>
<dbReference type="GO" id="GO:0005737">
    <property type="term" value="C:cytoplasm"/>
    <property type="evidence" value="ECO:0000318"/>
    <property type="project" value="GO_Central"/>
</dbReference>
<dbReference type="GO" id="GO:0030425">
    <property type="term" value="C:dendrite"/>
    <property type="evidence" value="ECO:0000266"/>
    <property type="project" value="RGD"/>
</dbReference>
<dbReference type="GO" id="GO:0043025">
    <property type="term" value="C:neuronal cell body"/>
    <property type="evidence" value="ECO:0000266"/>
    <property type="project" value="RGD"/>
</dbReference>
<dbReference type="GO" id="GO:0005634">
    <property type="term" value="C:nucleus"/>
    <property type="evidence" value="ECO:0000266"/>
    <property type="project" value="RGD"/>
</dbReference>
<dbReference type="GO" id="GO:0005667">
    <property type="term" value="C:transcription regulator complex"/>
    <property type="evidence" value="ECO:0000266"/>
    <property type="project" value="RGD"/>
</dbReference>
<dbReference type="GO" id="GO:0000981">
    <property type="term" value="F:DNA-binding transcription factor activity, RNA polymerase II-specific"/>
    <property type="evidence" value="ECO:0000318"/>
    <property type="project" value="GO_Central"/>
</dbReference>
<dbReference type="GO" id="GO:0000978">
    <property type="term" value="F:RNA polymerase II cis-regulatory region sequence-specific DNA binding"/>
    <property type="evidence" value="ECO:0000318"/>
    <property type="project" value="GO_Central"/>
</dbReference>
<dbReference type="GO" id="GO:1990837">
    <property type="term" value="F:sequence-specific double-stranded DNA binding"/>
    <property type="evidence" value="ECO:0000266"/>
    <property type="project" value="RGD"/>
</dbReference>
<dbReference type="GO" id="GO:0046332">
    <property type="term" value="F:SMAD binding"/>
    <property type="evidence" value="ECO:0000266"/>
    <property type="project" value="RGD"/>
</dbReference>
<dbReference type="GO" id="GO:0030514">
    <property type="term" value="P:negative regulation of BMP signaling pathway"/>
    <property type="evidence" value="ECO:0000266"/>
    <property type="project" value="RGD"/>
</dbReference>
<dbReference type="GO" id="GO:0045892">
    <property type="term" value="P:negative regulation of DNA-templated transcription"/>
    <property type="evidence" value="ECO:0000266"/>
    <property type="project" value="RGD"/>
</dbReference>
<dbReference type="GO" id="GO:0000122">
    <property type="term" value="P:negative regulation of transcription by RNA polymerase II"/>
    <property type="evidence" value="ECO:0000318"/>
    <property type="project" value="GO_Central"/>
</dbReference>
<dbReference type="CDD" id="cd21080">
    <property type="entry name" value="DHD_Skor"/>
    <property type="match status" value="1"/>
</dbReference>
<dbReference type="FunFam" id="3.10.390.10:FF:000001">
    <property type="entry name" value="SKI family transcriptional corepressor 1"/>
    <property type="match status" value="1"/>
</dbReference>
<dbReference type="FunFam" id="3.10.260.20:FF:000003">
    <property type="entry name" value="SKI family transcriptional corepressor 1 homolog-B-like"/>
    <property type="match status" value="1"/>
</dbReference>
<dbReference type="Gene3D" id="3.10.390.10">
    <property type="entry name" value="SAND domain-like"/>
    <property type="match status" value="1"/>
</dbReference>
<dbReference type="Gene3D" id="3.10.260.20">
    <property type="entry name" value="Ski"/>
    <property type="match status" value="1"/>
</dbReference>
<dbReference type="InterPro" id="IPR014890">
    <property type="entry name" value="c-SKI_SMAD4-bd_dom"/>
</dbReference>
<dbReference type="InterPro" id="IPR009061">
    <property type="entry name" value="DNA-bd_dom_put_sf"/>
</dbReference>
<dbReference type="InterPro" id="IPR010919">
    <property type="entry name" value="SAND-like_dom_sf"/>
</dbReference>
<dbReference type="InterPro" id="IPR003380">
    <property type="entry name" value="SKI/SNO/DAC"/>
</dbReference>
<dbReference type="InterPro" id="IPR037000">
    <property type="entry name" value="Ski_DNA-bd_sf"/>
</dbReference>
<dbReference type="InterPro" id="IPR023216">
    <property type="entry name" value="Tscrpt_reg_SKI_SnoN"/>
</dbReference>
<dbReference type="PANTHER" id="PTHR10005:SF8">
    <property type="entry name" value="SKI FAMILY TRANSCRIPTIONAL COREPRESSOR 1"/>
    <property type="match status" value="1"/>
</dbReference>
<dbReference type="PANTHER" id="PTHR10005">
    <property type="entry name" value="SKI ONCOGENE-RELATED"/>
    <property type="match status" value="1"/>
</dbReference>
<dbReference type="Pfam" id="PF08782">
    <property type="entry name" value="c-SKI_SMAD_bind"/>
    <property type="match status" value="1"/>
</dbReference>
<dbReference type="Pfam" id="PF02437">
    <property type="entry name" value="Ski_Sno_DHD"/>
    <property type="match status" value="1"/>
</dbReference>
<dbReference type="SMART" id="SM01046">
    <property type="entry name" value="c-SKI_SMAD_bind"/>
    <property type="match status" value="1"/>
</dbReference>
<dbReference type="SUPFAM" id="SSF46955">
    <property type="entry name" value="Putative DNA-binding domain"/>
    <property type="match status" value="1"/>
</dbReference>
<dbReference type="SUPFAM" id="SSF63763">
    <property type="entry name" value="SAND domain-like"/>
    <property type="match status" value="1"/>
</dbReference>
<evidence type="ECO:0000250" key="1"/>
<evidence type="ECO:0000255" key="2"/>
<evidence type="ECO:0000256" key="3">
    <source>
        <dbReference type="SAM" id="MobiDB-lite"/>
    </source>
</evidence>
<evidence type="ECO:0000269" key="4">
    <source>
    </source>
</evidence>
<evidence type="ECO:0000305" key="5"/>
<comment type="function">
    <text evidence="1">Inhibits BMP signaling. Acts as a transcriptional corepressor of LBX1 (By similarity).</text>
</comment>
<comment type="subunit">
    <text evidence="1">Interacts with LBX1. Interacts with SMAD1, SMAD2 and SMAD3 (By similarity).</text>
</comment>
<comment type="subcellular location">
    <subcellularLocation>
        <location evidence="1">Nucleus</location>
    </subcellularLocation>
</comment>
<comment type="similarity">
    <text evidence="2">Belongs to the SKI family.</text>
</comment>
<sequence length="964" mass="100234">MALLCGLGQVTLRLWVSLPFQTENRIGFLAAGAFLRSGGMEALTTQLGPGREGSSSPNSKQELQPYSGSSALKPNQVGETSLYGVPIVSLVIDGQERLCLAQISNTLLKNYSYNEIHNRRVALGITCVQCTPVQLEILRRAGAMPISSRRCGMITKREAERLCKSFLGEHKPPKLPENFAFDVVHECAWGSRGSFIPARYNSSRAKCIKCGYCSMYFSPNKFIFHSHRTPDAKYTQPDAANFNSWRRHLKLSDKSATDELSHAWEDVKAMFNGGTRKRTFSLQGGGGGGANSGSGGAGKGGAGGGGGPGCGSEMAPGPPPHKSLRCGEDEASGPPGPPPPHPQRALGLAAAANGPAGPGGPGGSAGVRSYPVIPVPSKGFGLLQKLPPPLFPHPYGFPTAFGLCPKKDDPVLVAGEPKGGPGTGSGGGAGTAAGAGGPGAGHLPPGAGPGPGGGTMFWGHQPSGAAKDAAAVAAAAAAATVYPTFPMFWPAAGSLPVPPYPAAQSQAKAVAAAVAAAAAAAAAAAGGGGPESLDGAEPAKEGSLGTEERCPSALSRGPLDEDGADEALPPSLAPLAPPPPPPARKSSYVSAFRPVVKDAESIAKLYGSAREAYGSGPARGPVPGTGTGGGYVSPDFLSEGSSSYHSASPDVDTADEPEVDVESNRFPDEEGAQEDTEPSVPSTGGGPDGDQPAGPPSVTSSGADGPTDSADGDSPRPRRRLGPPPAIRSAFGDLVADDVVRRTERSPPNGGYELREPCGPLGGPAAAKVYVPERDEHVKSAAAAAALGPAASYLCTPETHEPDKEDNHSTTADDLETRKSFSDQRSVSQPSPANTDRGEDGLTLDVTGTQLVEKDIENLAREELQKLLLEQMELRKKLEREFQSLKDNFQDQMKRELAYREEMVQQLQIVRDTLCNELDQERKARYAIQQKLKEAHDALHHFSCKMLTPRHCTGNCSFKPPLLP</sequence>
<name>SKOR1_RAT</name>